<sequence>MMGLDLLVSLLALSVSPCIAATRSPLQIPVLDTQPIETGREFTLRHMLHHGTYRDPLLHKRLDIRPDTLLWAASENGEKRESVPRFRVSSRPINIHRLSDRHVSVVEDYLSIARMTSSAVTLSSDYWTLDEVDAPDVTDKETVLSLAKMTSNAYIMIPGSGEWFDVVPPFNHSDSFGWDSDGLRGHIYSDNTNSTIVVVLKGTSAAIFDGGGTTTNDKVNDNLFFSCCCAQGGHYFWRQVCDCYSSTYTCNTACVRKALRQENRYYRAALNLYSNITAMYPQSNIWVTGHSLGGAVSSLLGMTYGLPVVTFEAVPEALPASRLGLPPPPGTDPSSPQARNYTGAYHFGHTADPIYMGTCNGATSVCTLGGYAMESSCHTGQLCTYDTVEDFGWRVGIGTHRIREVITDVIERYDDVPTCAPFTECVDCNNWKFFESNETTPTPTTTTTSTSTRTRTSTCKTPGWWGCLDPTTTPTTTATTSTTSTSTCKTPGWFGCKDPTTTSTVPTASPAPTITPTSPPTTTASTTSTCESPGWFGCNDPTSTTTFPVPSTTSTSTPCSTPGWFWGCRDQTTTTSASPPITSPP</sequence>
<dbReference type="EC" id="3.1.1.3"/>
<dbReference type="EMBL" id="CH476664">
    <property type="protein sequence ID" value="EDN04383.1"/>
    <property type="status" value="ALT_SEQ"/>
    <property type="molecule type" value="Genomic_DNA"/>
</dbReference>
<dbReference type="STRING" id="339724.A6REI4"/>
<dbReference type="ESTHER" id="ajecn-atg15">
    <property type="family name" value="ATG15-related-lipase"/>
</dbReference>
<dbReference type="GlyCosmos" id="A6REI4">
    <property type="glycosylation" value="5 sites, No reported glycans"/>
</dbReference>
<dbReference type="KEGG" id="aje:HCAG_08049"/>
<dbReference type="HOGENOM" id="CLU_028295_0_0_1"/>
<dbReference type="OrthoDB" id="11613at299071"/>
<dbReference type="Proteomes" id="UP000009297">
    <property type="component" value="Unassembled WGS sequence"/>
</dbReference>
<dbReference type="GO" id="GO:0032585">
    <property type="term" value="C:multivesicular body membrane"/>
    <property type="evidence" value="ECO:0007669"/>
    <property type="project" value="UniProtKB-SubCell"/>
</dbReference>
<dbReference type="GO" id="GO:0005775">
    <property type="term" value="C:vacuolar lumen"/>
    <property type="evidence" value="ECO:0007669"/>
    <property type="project" value="TreeGrafter"/>
</dbReference>
<dbReference type="GO" id="GO:0004620">
    <property type="term" value="F:phospholipase activity"/>
    <property type="evidence" value="ECO:0007669"/>
    <property type="project" value="TreeGrafter"/>
</dbReference>
<dbReference type="GO" id="GO:0004806">
    <property type="term" value="F:triacylglycerol lipase activity"/>
    <property type="evidence" value="ECO:0007669"/>
    <property type="project" value="UniProtKB-EC"/>
</dbReference>
<dbReference type="GO" id="GO:0034496">
    <property type="term" value="P:multivesicular body membrane disassembly"/>
    <property type="evidence" value="ECO:0007669"/>
    <property type="project" value="TreeGrafter"/>
</dbReference>
<dbReference type="GO" id="GO:0046461">
    <property type="term" value="P:neutral lipid catabolic process"/>
    <property type="evidence" value="ECO:0007669"/>
    <property type="project" value="TreeGrafter"/>
</dbReference>
<dbReference type="GO" id="GO:0006660">
    <property type="term" value="P:phosphatidylserine catabolic process"/>
    <property type="evidence" value="ECO:0007669"/>
    <property type="project" value="TreeGrafter"/>
</dbReference>
<dbReference type="GO" id="GO:0034727">
    <property type="term" value="P:piecemeal microautophagy of the nucleus"/>
    <property type="evidence" value="ECO:0007669"/>
    <property type="project" value="TreeGrafter"/>
</dbReference>
<dbReference type="CDD" id="cd00519">
    <property type="entry name" value="Lipase_3"/>
    <property type="match status" value="1"/>
</dbReference>
<dbReference type="FunFam" id="3.40.50.1820:FF:000129">
    <property type="entry name" value="Autophagy related lipase Atg15, putative"/>
    <property type="match status" value="1"/>
</dbReference>
<dbReference type="Gene3D" id="3.40.50.1820">
    <property type="entry name" value="alpha/beta hydrolase"/>
    <property type="match status" value="1"/>
</dbReference>
<dbReference type="InterPro" id="IPR029058">
    <property type="entry name" value="AB_hydrolase_fold"/>
</dbReference>
<dbReference type="InterPro" id="IPR050805">
    <property type="entry name" value="ATG15_Lipase"/>
</dbReference>
<dbReference type="InterPro" id="IPR002921">
    <property type="entry name" value="Fungal_lipase-type"/>
</dbReference>
<dbReference type="PANTHER" id="PTHR47175">
    <property type="entry name" value="LIPASE ATG15-RELATED"/>
    <property type="match status" value="1"/>
</dbReference>
<dbReference type="PANTHER" id="PTHR47175:SF2">
    <property type="entry name" value="LIPASE ATG15-RELATED"/>
    <property type="match status" value="1"/>
</dbReference>
<dbReference type="Pfam" id="PF01764">
    <property type="entry name" value="Lipase_3"/>
    <property type="match status" value="1"/>
</dbReference>
<dbReference type="SUPFAM" id="SSF53474">
    <property type="entry name" value="alpha/beta-Hydrolases"/>
    <property type="match status" value="1"/>
</dbReference>
<dbReference type="PROSITE" id="PS00120">
    <property type="entry name" value="LIPASE_SER"/>
    <property type="match status" value="1"/>
</dbReference>
<feature type="chain" id="PRO_0000317957" description="Putative lipase ATG15">
    <location>
        <begin position="1"/>
        <end position="585"/>
    </location>
</feature>
<feature type="transmembrane region" description="Helical; Signal-anchor for type II membrane protein">
    <location>
        <begin position="1"/>
        <end position="21"/>
    </location>
</feature>
<feature type="topological domain" description="Lumenal" evidence="1">
    <location>
        <begin position="22"/>
        <end position="585"/>
    </location>
</feature>
<feature type="region of interest" description="Disordered" evidence="5">
    <location>
        <begin position="500"/>
        <end position="526"/>
    </location>
</feature>
<feature type="active site" description="Charge relay system" evidence="4">
    <location>
        <position position="291"/>
    </location>
</feature>
<feature type="glycosylation site" description="N-linked (GlcNAc...) asparagine" evidence="3">
    <location>
        <position position="171"/>
    </location>
</feature>
<feature type="glycosylation site" description="N-linked (GlcNAc...) asparagine" evidence="3">
    <location>
        <position position="193"/>
    </location>
</feature>
<feature type="glycosylation site" description="N-linked (GlcNAc...) asparagine" evidence="3">
    <location>
        <position position="275"/>
    </location>
</feature>
<feature type="glycosylation site" description="N-linked (GlcNAc...) asparagine" evidence="3">
    <location>
        <position position="340"/>
    </location>
</feature>
<feature type="glycosylation site" description="N-linked (GlcNAc...) asparagine" evidence="3">
    <location>
        <position position="437"/>
    </location>
</feature>
<evidence type="ECO:0000250" key="1"/>
<evidence type="ECO:0000250" key="2">
    <source>
        <dbReference type="UniProtKB" id="P25641"/>
    </source>
</evidence>
<evidence type="ECO:0000255" key="3"/>
<evidence type="ECO:0000255" key="4">
    <source>
        <dbReference type="PROSITE-ProRule" id="PRU10037"/>
    </source>
</evidence>
<evidence type="ECO:0000256" key="5">
    <source>
        <dbReference type="SAM" id="MobiDB-lite"/>
    </source>
</evidence>
<evidence type="ECO:0000305" key="6"/>
<proteinExistence type="inferred from homology"/>
<reference key="1">
    <citation type="journal article" date="2009" name="Genome Res.">
        <title>Comparative genomic analyses of the human fungal pathogens Coccidioides and their relatives.</title>
        <authorList>
            <person name="Sharpton T.J."/>
            <person name="Stajich J.E."/>
            <person name="Rounsley S.D."/>
            <person name="Gardner M.J."/>
            <person name="Wortman J.R."/>
            <person name="Jordar V.S."/>
            <person name="Maiti R."/>
            <person name="Kodira C.D."/>
            <person name="Neafsey D.E."/>
            <person name="Zeng Q."/>
            <person name="Hung C.-Y."/>
            <person name="McMahan C."/>
            <person name="Muszewska A."/>
            <person name="Grynberg M."/>
            <person name="Mandel M.A."/>
            <person name="Kellner E.M."/>
            <person name="Barker B.M."/>
            <person name="Galgiani J.N."/>
            <person name="Orbach M.J."/>
            <person name="Kirkland T.N."/>
            <person name="Cole G.T."/>
            <person name="Henn M.R."/>
            <person name="Birren B.W."/>
            <person name="Taylor J.W."/>
        </authorList>
    </citation>
    <scope>NUCLEOTIDE SEQUENCE [LARGE SCALE GENOMIC DNA]</scope>
    <source>
        <strain>NAm1 / WU24</strain>
    </source>
</reference>
<protein>
    <recommendedName>
        <fullName>Putative lipase ATG15</fullName>
        <ecNumber>3.1.1.3</ecNumber>
    </recommendedName>
    <alternativeName>
        <fullName>Autophagy-related protein 15</fullName>
    </alternativeName>
</protein>
<comment type="function">
    <text evidence="1">Lipase which is essential for lysis of subvacuolar cytoplasm to vacuole targeted bodies and intravacuolar autophagic bodies. Involved in the lysis of intravacuolar multivesicular body (MVB) vesicles. The intravacuolar membrane disintegration by ATG15 is critical to life span extension (By similarity).</text>
</comment>
<comment type="catalytic activity">
    <reaction>
        <text>a triacylglycerol + H2O = a diacylglycerol + a fatty acid + H(+)</text>
        <dbReference type="Rhea" id="RHEA:12044"/>
        <dbReference type="ChEBI" id="CHEBI:15377"/>
        <dbReference type="ChEBI" id="CHEBI:15378"/>
        <dbReference type="ChEBI" id="CHEBI:17855"/>
        <dbReference type="ChEBI" id="CHEBI:18035"/>
        <dbReference type="ChEBI" id="CHEBI:28868"/>
        <dbReference type="EC" id="3.1.1.3"/>
    </reaction>
</comment>
<comment type="subunit">
    <text evidence="1">Binds to both phosphatidylinositol (PI) and phosphatidylinositol 3,5-bisphosphate (PIP2).</text>
</comment>
<comment type="subcellular location">
    <subcellularLocation>
        <location evidence="2">Endosome</location>
        <location evidence="2">Multivesicular body membrane</location>
        <topology evidence="2">Single-pass type II membrane protein</topology>
    </subcellularLocation>
    <subcellularLocation>
        <location evidence="2">Prevacuolar compartment membrane</location>
        <topology evidence="2">Single-pass type II membrane protein</topology>
    </subcellularLocation>
    <text evidence="2">From ER, targeted to vacuolar lumen at the MVB vesicles via the Golgi and the prevacuolar compartment (PVC).</text>
</comment>
<comment type="similarity">
    <text evidence="6">Belongs to the AB hydrolase superfamily. Lipase family.</text>
</comment>
<comment type="sequence caution" evidence="6">
    <conflict type="erroneous gene model prediction">
        <sequence resource="EMBL-CDS" id="EDN04383"/>
    </conflict>
</comment>
<accession>A6REI4</accession>
<organism>
    <name type="scientific">Ajellomyces capsulatus (strain NAm1 / WU24)</name>
    <name type="common">Darling's disease fungus</name>
    <name type="synonym">Histoplasma capsulatum</name>
    <dbReference type="NCBI Taxonomy" id="2059318"/>
    <lineage>
        <taxon>Eukaryota</taxon>
        <taxon>Fungi</taxon>
        <taxon>Dikarya</taxon>
        <taxon>Ascomycota</taxon>
        <taxon>Pezizomycotina</taxon>
        <taxon>Eurotiomycetes</taxon>
        <taxon>Eurotiomycetidae</taxon>
        <taxon>Onygenales</taxon>
        <taxon>Ajellomycetaceae</taxon>
        <taxon>Histoplasma</taxon>
    </lineage>
</organism>
<keyword id="KW-0072">Autophagy</keyword>
<keyword id="KW-0967">Endosome</keyword>
<keyword id="KW-0325">Glycoprotein</keyword>
<keyword id="KW-0378">Hydrolase</keyword>
<keyword id="KW-0442">Lipid degradation</keyword>
<keyword id="KW-0443">Lipid metabolism</keyword>
<keyword id="KW-0472">Membrane</keyword>
<keyword id="KW-1185">Reference proteome</keyword>
<keyword id="KW-0735">Signal-anchor</keyword>
<keyword id="KW-0812">Transmembrane</keyword>
<keyword id="KW-1133">Transmembrane helix</keyword>
<name>ATG15_AJECN</name>
<gene>
    <name type="primary">ATG15</name>
    <name type="ORF">HCAG_08049</name>
</gene>